<reference key="1">
    <citation type="journal article" date="2013" name="Nature">
        <title>The zebrafish reference genome sequence and its relationship to the human genome.</title>
        <authorList>
            <person name="Howe K."/>
            <person name="Clark M.D."/>
            <person name="Torroja C.F."/>
            <person name="Torrance J."/>
            <person name="Berthelot C."/>
            <person name="Muffato M."/>
            <person name="Collins J.E."/>
            <person name="Humphray S."/>
            <person name="McLaren K."/>
            <person name="Matthews L."/>
            <person name="McLaren S."/>
            <person name="Sealy I."/>
            <person name="Caccamo M."/>
            <person name="Churcher C."/>
            <person name="Scott C."/>
            <person name="Barrett J.C."/>
            <person name="Koch R."/>
            <person name="Rauch G.J."/>
            <person name="White S."/>
            <person name="Chow W."/>
            <person name="Kilian B."/>
            <person name="Quintais L.T."/>
            <person name="Guerra-Assuncao J.A."/>
            <person name="Zhou Y."/>
            <person name="Gu Y."/>
            <person name="Yen J."/>
            <person name="Vogel J.H."/>
            <person name="Eyre T."/>
            <person name="Redmond S."/>
            <person name="Banerjee R."/>
            <person name="Chi J."/>
            <person name="Fu B."/>
            <person name="Langley E."/>
            <person name="Maguire S.F."/>
            <person name="Laird G.K."/>
            <person name="Lloyd D."/>
            <person name="Kenyon E."/>
            <person name="Donaldson S."/>
            <person name="Sehra H."/>
            <person name="Almeida-King J."/>
            <person name="Loveland J."/>
            <person name="Trevanion S."/>
            <person name="Jones M."/>
            <person name="Quail M."/>
            <person name="Willey D."/>
            <person name="Hunt A."/>
            <person name="Burton J."/>
            <person name="Sims S."/>
            <person name="McLay K."/>
            <person name="Plumb B."/>
            <person name="Davis J."/>
            <person name="Clee C."/>
            <person name="Oliver K."/>
            <person name="Clark R."/>
            <person name="Riddle C."/>
            <person name="Elliot D."/>
            <person name="Threadgold G."/>
            <person name="Harden G."/>
            <person name="Ware D."/>
            <person name="Begum S."/>
            <person name="Mortimore B."/>
            <person name="Kerry G."/>
            <person name="Heath P."/>
            <person name="Phillimore B."/>
            <person name="Tracey A."/>
            <person name="Corby N."/>
            <person name="Dunn M."/>
            <person name="Johnson C."/>
            <person name="Wood J."/>
            <person name="Clark S."/>
            <person name="Pelan S."/>
            <person name="Griffiths G."/>
            <person name="Smith M."/>
            <person name="Glithero R."/>
            <person name="Howden P."/>
            <person name="Barker N."/>
            <person name="Lloyd C."/>
            <person name="Stevens C."/>
            <person name="Harley J."/>
            <person name="Holt K."/>
            <person name="Panagiotidis G."/>
            <person name="Lovell J."/>
            <person name="Beasley H."/>
            <person name="Henderson C."/>
            <person name="Gordon D."/>
            <person name="Auger K."/>
            <person name="Wright D."/>
            <person name="Collins J."/>
            <person name="Raisen C."/>
            <person name="Dyer L."/>
            <person name="Leung K."/>
            <person name="Robertson L."/>
            <person name="Ambridge K."/>
            <person name="Leongamornlert D."/>
            <person name="McGuire S."/>
            <person name="Gilderthorp R."/>
            <person name="Griffiths C."/>
            <person name="Manthravadi D."/>
            <person name="Nichol S."/>
            <person name="Barker G."/>
            <person name="Whitehead S."/>
            <person name="Kay M."/>
            <person name="Brown J."/>
            <person name="Murnane C."/>
            <person name="Gray E."/>
            <person name="Humphries M."/>
            <person name="Sycamore N."/>
            <person name="Barker D."/>
            <person name="Saunders D."/>
            <person name="Wallis J."/>
            <person name="Babbage A."/>
            <person name="Hammond S."/>
            <person name="Mashreghi-Mohammadi M."/>
            <person name="Barr L."/>
            <person name="Martin S."/>
            <person name="Wray P."/>
            <person name="Ellington A."/>
            <person name="Matthews N."/>
            <person name="Ellwood M."/>
            <person name="Woodmansey R."/>
            <person name="Clark G."/>
            <person name="Cooper J."/>
            <person name="Tromans A."/>
            <person name="Grafham D."/>
            <person name="Skuce C."/>
            <person name="Pandian R."/>
            <person name="Andrews R."/>
            <person name="Harrison E."/>
            <person name="Kimberley A."/>
            <person name="Garnett J."/>
            <person name="Fosker N."/>
            <person name="Hall R."/>
            <person name="Garner P."/>
            <person name="Kelly D."/>
            <person name="Bird C."/>
            <person name="Palmer S."/>
            <person name="Gehring I."/>
            <person name="Berger A."/>
            <person name="Dooley C.M."/>
            <person name="Ersan-Urun Z."/>
            <person name="Eser C."/>
            <person name="Geiger H."/>
            <person name="Geisler M."/>
            <person name="Karotki L."/>
            <person name="Kirn A."/>
            <person name="Konantz J."/>
            <person name="Konantz M."/>
            <person name="Oberlander M."/>
            <person name="Rudolph-Geiger S."/>
            <person name="Teucke M."/>
            <person name="Lanz C."/>
            <person name="Raddatz G."/>
            <person name="Osoegawa K."/>
            <person name="Zhu B."/>
            <person name="Rapp A."/>
            <person name="Widaa S."/>
            <person name="Langford C."/>
            <person name="Yang F."/>
            <person name="Schuster S.C."/>
            <person name="Carter N.P."/>
            <person name="Harrow J."/>
            <person name="Ning Z."/>
            <person name="Herrero J."/>
            <person name="Searle S.M."/>
            <person name="Enright A."/>
            <person name="Geisler R."/>
            <person name="Plasterk R.H."/>
            <person name="Lee C."/>
            <person name="Westerfield M."/>
            <person name="de Jong P.J."/>
            <person name="Zon L.I."/>
            <person name="Postlethwait J.H."/>
            <person name="Nusslein-Volhard C."/>
            <person name="Hubbard T.J."/>
            <person name="Roest Crollius H."/>
            <person name="Rogers J."/>
            <person name="Stemple D.L."/>
        </authorList>
    </citation>
    <scope>NUCLEOTIDE SEQUENCE [LARGE SCALE GENOMIC DNA]</scope>
    <source>
        <strain>Tuebingen</strain>
    </source>
</reference>
<reference key="2">
    <citation type="submission" date="2007-03" db="EMBL/GenBank/DDBJ databases">
        <authorList>
            <consortium name="NIH - Zebrafish Gene Collection (ZGC) project"/>
        </authorList>
    </citation>
    <scope>NUCLEOTIDE SEQUENCE [LARGE SCALE MRNA] (ISOFORMS 1 AND 2)</scope>
    <source>
        <tissue>Egg</tissue>
        <tissue>Ovary</tissue>
    </source>
</reference>
<evidence type="ECO:0000250" key="1"/>
<evidence type="ECO:0000255" key="2"/>
<evidence type="ECO:0000255" key="3">
    <source>
        <dbReference type="PROSITE-ProRule" id="PRU00159"/>
    </source>
</evidence>
<evidence type="ECO:0000255" key="4">
    <source>
        <dbReference type="PROSITE-ProRule" id="PRU10027"/>
    </source>
</evidence>
<evidence type="ECO:0000256" key="5">
    <source>
        <dbReference type="SAM" id="MobiDB-lite"/>
    </source>
</evidence>
<evidence type="ECO:0000303" key="6">
    <source ref="2"/>
</evidence>
<evidence type="ECO:0000305" key="7"/>
<organism>
    <name type="scientific">Danio rerio</name>
    <name type="common">Zebrafish</name>
    <name type="synonym">Brachydanio rerio</name>
    <dbReference type="NCBI Taxonomy" id="7955"/>
    <lineage>
        <taxon>Eukaryota</taxon>
        <taxon>Metazoa</taxon>
        <taxon>Chordata</taxon>
        <taxon>Craniata</taxon>
        <taxon>Vertebrata</taxon>
        <taxon>Euteleostomi</taxon>
        <taxon>Actinopterygii</taxon>
        <taxon>Neopterygii</taxon>
        <taxon>Teleostei</taxon>
        <taxon>Ostariophysi</taxon>
        <taxon>Cypriniformes</taxon>
        <taxon>Danionidae</taxon>
        <taxon>Danioninae</taxon>
        <taxon>Danio</taxon>
    </lineage>
</organism>
<gene>
    <name type="primary">wee2</name>
    <name type="synonym">wee1b</name>
    <name type="ORF">si:ch211-238n5.5</name>
</gene>
<name>WEE2_DANRE</name>
<sequence>MKWSEMASVNATQQHLNFSSSWEEDSSDNSFDEWTHKSVPLRSPCRTPRIQRHRNRSITVSPSVPTSPIPYAAWKKLRLCDSPSTPKSLLSKSTMPCSSSKTCRSQRFLRLSTAFERVPSVNINPFTPDTVRRNSEHYKRKSQRSDDDEDYGPRSKEIQNSSEDESFFLPSKRPAVSARMLSRYESEFLELACIGVGEFGSVYRCVKRLDGCMYAIKRSRRPIAGSANEQLALKEVYAHAVLGHHPHVVRYYSAWAEDDHMIIQNEYCDGGSLHDAITEKREQGEFFSVPELRDLLLQVSMGLKYIHNSGLVHLDIKPSNIFICRRSTLSAGGEGDSEEEDESHSSGVVYKIGDLGHVTSISSPQVEEGDSRFLAYEVLREDYTHLPKADIFALGLTVLLAAGASPLPQNGDDWHRLRQGELPNLPHELPALFKDLLKSLLDPDPTARPSATALCRHDVLCKERAGKLATQLRKELNVEKFRTAMLERELKEARLAATSPQQSCQPGSLPKAKRKLVGRNVARSVSFGFPGY</sequence>
<proteinExistence type="evidence at transcript level"/>
<comment type="function">
    <text evidence="1">Oocyte-specific protein tyrosine kinase that phosphorylates and inhibits cdk1 and acts as a key regulator of meiosis. Required to maintain meiotic arrest in oocytes by phosphorylating cdk1 at 'Tyr-15', leading to inhibit cdk1 activity and prevent meiotic reentry (By similarity).</text>
</comment>
<comment type="catalytic activity">
    <reaction evidence="4">
        <text>L-tyrosyl-[protein] + ATP = O-phospho-L-tyrosyl-[protein] + ADP + H(+)</text>
        <dbReference type="Rhea" id="RHEA:10596"/>
        <dbReference type="Rhea" id="RHEA-COMP:10136"/>
        <dbReference type="Rhea" id="RHEA-COMP:20101"/>
        <dbReference type="ChEBI" id="CHEBI:15378"/>
        <dbReference type="ChEBI" id="CHEBI:30616"/>
        <dbReference type="ChEBI" id="CHEBI:46858"/>
        <dbReference type="ChEBI" id="CHEBI:61978"/>
        <dbReference type="ChEBI" id="CHEBI:456216"/>
        <dbReference type="EC" id="2.7.10.2"/>
    </reaction>
</comment>
<comment type="subcellular location">
    <subcellularLocation>
        <location evidence="1">Nucleus</location>
    </subcellularLocation>
</comment>
<comment type="alternative products">
    <event type="alternative splicing"/>
    <isoform>
        <id>Q1LX51-1</id>
        <name>1</name>
        <sequence type="displayed"/>
    </isoform>
    <isoform>
        <id>Q1LX51-2</id>
        <name>2</name>
        <sequence type="described" ref="VSP_041325"/>
    </isoform>
</comment>
<comment type="similarity">
    <text evidence="3">Belongs to the protein kinase superfamily. Ser/Thr protein kinase family. WEE1 subfamily.</text>
</comment>
<feature type="chain" id="PRO_0000409528" description="Wee1-like protein kinase 2">
    <location>
        <begin position="1"/>
        <end position="532"/>
    </location>
</feature>
<feature type="domain" description="Protein kinase" evidence="3">
    <location>
        <begin position="188"/>
        <end position="465"/>
    </location>
</feature>
<feature type="region of interest" description="Disordered" evidence="5">
    <location>
        <begin position="123"/>
        <end position="166"/>
    </location>
</feature>
<feature type="coiled-coil region" evidence="2">
    <location>
        <begin position="469"/>
        <end position="495"/>
    </location>
</feature>
<feature type="active site" description="Proton acceptor" evidence="3 4">
    <location>
        <position position="315"/>
    </location>
</feature>
<feature type="binding site" evidence="3">
    <location>
        <begin position="194"/>
        <end position="202"/>
    </location>
    <ligand>
        <name>ATP</name>
        <dbReference type="ChEBI" id="CHEBI:30616"/>
    </ligand>
</feature>
<feature type="binding site" evidence="3">
    <location>
        <position position="217"/>
    </location>
    <ligand>
        <name>ATP</name>
        <dbReference type="ChEBI" id="CHEBI:30616"/>
    </ligand>
</feature>
<feature type="binding site" evidence="1">
    <location>
        <position position="320"/>
    </location>
    <ligand>
        <name>Mg(2+)</name>
        <dbReference type="ChEBI" id="CHEBI:18420"/>
    </ligand>
</feature>
<feature type="binding site" evidence="1">
    <location>
        <position position="354"/>
    </location>
    <ligand>
        <name>Mg(2+)</name>
        <dbReference type="ChEBI" id="CHEBI:18420"/>
    </ligand>
</feature>
<feature type="splice variant" id="VSP_041325" description="In isoform 2." evidence="6">
    <location>
        <begin position="1"/>
        <end position="5"/>
    </location>
</feature>
<feature type="sequence conflict" description="In Ref. 2; AAI08039." evidence="7" ref="2">
    <original>N</original>
    <variation>S</variation>
    <location>
        <position position="17"/>
    </location>
</feature>
<feature type="sequence conflict" description="In Ref. 2; AAI34854." evidence="7" ref="2">
    <original>K</original>
    <variation>R</variation>
    <location>
        <position position="37"/>
    </location>
</feature>
<feature type="sequence conflict" description="In Ref. 2; AAI08039/AAI34854." evidence="7" ref="2">
    <original>T</original>
    <variation>P</variation>
    <location>
        <position position="102"/>
    </location>
</feature>
<feature type="sequence conflict" description="In Ref. 2; AAI08039/AAI34854." evidence="7" ref="2">
    <original>N</original>
    <variation>S</variation>
    <location>
        <position position="424"/>
    </location>
</feature>
<feature type="sequence conflict" description="In Ref. 2; AAI08039." evidence="7" ref="2">
    <original>C</original>
    <variation>R</variation>
    <location>
        <position position="461"/>
    </location>
</feature>
<dbReference type="EC" id="2.7.10.2"/>
<dbReference type="EMBL" id="BX470166">
    <property type="protein sequence ID" value="CAK04661.1"/>
    <property type="molecule type" value="Genomic_DNA"/>
</dbReference>
<dbReference type="EMBL" id="BX470166">
    <property type="protein sequence ID" value="CAK04662.1"/>
    <property type="molecule type" value="Genomic_DNA"/>
</dbReference>
<dbReference type="EMBL" id="BC108038">
    <property type="protein sequence ID" value="AAI08039.1"/>
    <property type="molecule type" value="mRNA"/>
</dbReference>
<dbReference type="EMBL" id="BC134853">
    <property type="protein sequence ID" value="AAI34854.1"/>
    <property type="molecule type" value="mRNA"/>
</dbReference>
<dbReference type="RefSeq" id="NP_001032299.2">
    <molecule id="Q1LX51-2"/>
    <property type="nucleotide sequence ID" value="NM_001037222.2"/>
</dbReference>
<dbReference type="RefSeq" id="NP_001038367.1">
    <molecule id="Q1LX51-1"/>
    <property type="nucleotide sequence ID" value="NM_001044902.1"/>
</dbReference>
<dbReference type="RefSeq" id="XP_068070829.1">
    <molecule id="Q1LX51-2"/>
    <property type="nucleotide sequence ID" value="XM_068214728.1"/>
</dbReference>
<dbReference type="SMR" id="Q1LX51"/>
<dbReference type="FunCoup" id="Q1LX51">
    <property type="interactions" value="460"/>
</dbReference>
<dbReference type="STRING" id="7955.ENSDARP00000109848"/>
<dbReference type="PaxDb" id="7955-ENSDARP00000109848"/>
<dbReference type="Ensembl" id="ENSDART00000121699">
    <molecule id="Q1LX51-1"/>
    <property type="protein sequence ID" value="ENSDARP00000109848"/>
    <property type="gene ID" value="ENSDARG00000012718"/>
</dbReference>
<dbReference type="GeneID" id="327471"/>
<dbReference type="KEGG" id="dre:327471"/>
<dbReference type="AGR" id="ZFIN:ZDB-GENE-030131-5682"/>
<dbReference type="CTD" id="494551"/>
<dbReference type="ZFIN" id="ZDB-GENE-030131-5682">
    <property type="gene designation" value="wee2"/>
</dbReference>
<dbReference type="eggNOG" id="KOG0601">
    <property type="taxonomic scope" value="Eukaryota"/>
</dbReference>
<dbReference type="InParanoid" id="Q1LX51"/>
<dbReference type="OMA" id="VKISRHQ"/>
<dbReference type="OrthoDB" id="5337378at2759"/>
<dbReference type="PhylomeDB" id="Q1LX51"/>
<dbReference type="TreeFam" id="TF101088"/>
<dbReference type="PRO" id="PR:Q1LX51"/>
<dbReference type="Proteomes" id="UP000000437">
    <property type="component" value="Alternate scaffold 18"/>
</dbReference>
<dbReference type="Proteomes" id="UP000000437">
    <property type="component" value="Chromosome 18"/>
</dbReference>
<dbReference type="Bgee" id="ENSDARG00000012718">
    <property type="expression patterns" value="Expressed in mature ovarian follicle and 19 other cell types or tissues"/>
</dbReference>
<dbReference type="ExpressionAtlas" id="Q1LX51">
    <property type="expression patterns" value="baseline"/>
</dbReference>
<dbReference type="GO" id="GO:0005737">
    <property type="term" value="C:cytoplasm"/>
    <property type="evidence" value="ECO:0000318"/>
    <property type="project" value="GO_Central"/>
</dbReference>
<dbReference type="GO" id="GO:0005634">
    <property type="term" value="C:nucleus"/>
    <property type="evidence" value="ECO:0000318"/>
    <property type="project" value="GO_Central"/>
</dbReference>
<dbReference type="GO" id="GO:0005524">
    <property type="term" value="F:ATP binding"/>
    <property type="evidence" value="ECO:0007669"/>
    <property type="project" value="UniProtKB-KW"/>
</dbReference>
<dbReference type="GO" id="GO:0000287">
    <property type="term" value="F:magnesium ion binding"/>
    <property type="evidence" value="ECO:0007669"/>
    <property type="project" value="InterPro"/>
</dbReference>
<dbReference type="GO" id="GO:0004715">
    <property type="term" value="F:non-membrane spanning protein tyrosine kinase activity"/>
    <property type="evidence" value="ECO:0007669"/>
    <property type="project" value="UniProtKB-EC"/>
</dbReference>
<dbReference type="GO" id="GO:0004713">
    <property type="term" value="F:protein tyrosine kinase activity"/>
    <property type="evidence" value="ECO:0000318"/>
    <property type="project" value="GO_Central"/>
</dbReference>
<dbReference type="GO" id="GO:0051321">
    <property type="term" value="P:meiotic cell cycle"/>
    <property type="evidence" value="ECO:0007669"/>
    <property type="project" value="UniProtKB-KW"/>
</dbReference>
<dbReference type="GO" id="GO:0000278">
    <property type="term" value="P:mitotic cell cycle"/>
    <property type="evidence" value="ECO:0007669"/>
    <property type="project" value="InterPro"/>
</dbReference>
<dbReference type="GO" id="GO:0060631">
    <property type="term" value="P:regulation of meiosis I"/>
    <property type="evidence" value="ECO:0000318"/>
    <property type="project" value="GO_Central"/>
</dbReference>
<dbReference type="CDD" id="cd14139">
    <property type="entry name" value="PTKc_Wee1b"/>
    <property type="match status" value="1"/>
</dbReference>
<dbReference type="FunFam" id="3.30.200.20:FF:000115">
    <property type="entry name" value="Wee1-like kinase 2"/>
    <property type="match status" value="1"/>
</dbReference>
<dbReference type="FunFam" id="1.10.510.10:FF:000217">
    <property type="entry name" value="Wee1-like protein kinase"/>
    <property type="match status" value="1"/>
</dbReference>
<dbReference type="Gene3D" id="3.30.200.20">
    <property type="entry name" value="Phosphorylase Kinase, domain 1"/>
    <property type="match status" value="1"/>
</dbReference>
<dbReference type="Gene3D" id="1.10.510.10">
    <property type="entry name" value="Transferase(Phosphotransferase) domain 1"/>
    <property type="match status" value="1"/>
</dbReference>
<dbReference type="InterPro" id="IPR050339">
    <property type="entry name" value="CC_SR_Kinase"/>
</dbReference>
<dbReference type="InterPro" id="IPR011009">
    <property type="entry name" value="Kinase-like_dom_sf"/>
</dbReference>
<dbReference type="InterPro" id="IPR000719">
    <property type="entry name" value="Prot_kinase_dom"/>
</dbReference>
<dbReference type="InterPro" id="IPR017441">
    <property type="entry name" value="Protein_kinase_ATP_BS"/>
</dbReference>
<dbReference type="InterPro" id="IPR008271">
    <property type="entry name" value="Ser/Thr_kinase_AS"/>
</dbReference>
<dbReference type="InterPro" id="IPR017164">
    <property type="entry name" value="Wee1-like_protein_kinase"/>
</dbReference>
<dbReference type="PANTHER" id="PTHR11042">
    <property type="entry name" value="EUKARYOTIC TRANSLATION INITIATION FACTOR 2-ALPHA KINASE EIF2-ALPHA KINASE -RELATED"/>
    <property type="match status" value="1"/>
</dbReference>
<dbReference type="PANTHER" id="PTHR11042:SF75">
    <property type="entry name" value="WEE1-LIKE PROTEIN KINASE 2"/>
    <property type="match status" value="1"/>
</dbReference>
<dbReference type="Pfam" id="PF00069">
    <property type="entry name" value="Pkinase"/>
    <property type="match status" value="1"/>
</dbReference>
<dbReference type="PIRSF" id="PIRSF037281">
    <property type="entry name" value="Wee1-like_protein_kinase"/>
    <property type="match status" value="1"/>
</dbReference>
<dbReference type="SMART" id="SM00220">
    <property type="entry name" value="S_TKc"/>
    <property type="match status" value="1"/>
</dbReference>
<dbReference type="SUPFAM" id="SSF56112">
    <property type="entry name" value="Protein kinase-like (PK-like)"/>
    <property type="match status" value="1"/>
</dbReference>
<dbReference type="PROSITE" id="PS00107">
    <property type="entry name" value="PROTEIN_KINASE_ATP"/>
    <property type="match status" value="1"/>
</dbReference>
<dbReference type="PROSITE" id="PS50011">
    <property type="entry name" value="PROTEIN_KINASE_DOM"/>
    <property type="match status" value="1"/>
</dbReference>
<dbReference type="PROSITE" id="PS00108">
    <property type="entry name" value="PROTEIN_KINASE_ST"/>
    <property type="match status" value="1"/>
</dbReference>
<accession>Q1LX51</accession>
<accession>A4IFZ5</accession>
<accession>Q1LX50</accession>
<accession>Q32PP5</accession>
<protein>
    <recommendedName>
        <fullName>Wee1-like protein kinase 2</fullName>
        <ecNumber>2.7.10.2</ecNumber>
    </recommendedName>
    <alternativeName>
        <fullName>Wee1-like protein kinase 1B</fullName>
    </alternativeName>
    <alternativeName>
        <fullName>Wee1B kinase</fullName>
    </alternativeName>
</protein>
<keyword id="KW-0025">Alternative splicing</keyword>
<keyword id="KW-0067">ATP-binding</keyword>
<keyword id="KW-0175">Coiled coil</keyword>
<keyword id="KW-0418">Kinase</keyword>
<keyword id="KW-0460">Magnesium</keyword>
<keyword id="KW-0469">Meiosis</keyword>
<keyword id="KW-0479">Metal-binding</keyword>
<keyword id="KW-0547">Nucleotide-binding</keyword>
<keyword id="KW-0539">Nucleus</keyword>
<keyword id="KW-1185">Reference proteome</keyword>
<keyword id="KW-0808">Transferase</keyword>
<keyword id="KW-0829">Tyrosine-protein kinase</keyword>